<dbReference type="EMBL" id="EF380352">
    <property type="protein sequence ID" value="ABQ43296.1"/>
    <property type="molecule type" value="Genomic_DNA"/>
</dbReference>
<dbReference type="RefSeq" id="YP_001294135.1">
    <property type="nucleotide sequence ID" value="NC_009598.1"/>
</dbReference>
<dbReference type="SMR" id="A6MMF9"/>
<dbReference type="GeneID" id="5236434"/>
<dbReference type="GO" id="GO:0009507">
    <property type="term" value="C:chloroplast"/>
    <property type="evidence" value="ECO:0007669"/>
    <property type="project" value="UniProtKB-SubCell"/>
</dbReference>
<dbReference type="GO" id="GO:0022625">
    <property type="term" value="C:cytosolic large ribosomal subunit"/>
    <property type="evidence" value="ECO:0007669"/>
    <property type="project" value="TreeGrafter"/>
</dbReference>
<dbReference type="GO" id="GO:0070180">
    <property type="term" value="F:large ribosomal subunit rRNA binding"/>
    <property type="evidence" value="ECO:0007669"/>
    <property type="project" value="TreeGrafter"/>
</dbReference>
<dbReference type="GO" id="GO:0003735">
    <property type="term" value="F:structural constituent of ribosome"/>
    <property type="evidence" value="ECO:0007669"/>
    <property type="project" value="InterPro"/>
</dbReference>
<dbReference type="GO" id="GO:0006412">
    <property type="term" value="P:translation"/>
    <property type="evidence" value="ECO:0007669"/>
    <property type="project" value="UniProtKB-UniRule"/>
</dbReference>
<dbReference type="CDD" id="cd00337">
    <property type="entry name" value="Ribosomal_uL14"/>
    <property type="match status" value="1"/>
</dbReference>
<dbReference type="FunFam" id="2.40.150.20:FF:000002">
    <property type="entry name" value="50S ribosomal protein L14, chloroplastic"/>
    <property type="match status" value="1"/>
</dbReference>
<dbReference type="Gene3D" id="2.40.150.20">
    <property type="entry name" value="Ribosomal protein L14"/>
    <property type="match status" value="1"/>
</dbReference>
<dbReference type="HAMAP" id="MF_01367">
    <property type="entry name" value="Ribosomal_uL14"/>
    <property type="match status" value="1"/>
</dbReference>
<dbReference type="InterPro" id="IPR000218">
    <property type="entry name" value="Ribosomal_uL14"/>
</dbReference>
<dbReference type="InterPro" id="IPR005745">
    <property type="entry name" value="Ribosomal_uL14_bac-type"/>
</dbReference>
<dbReference type="InterPro" id="IPR019972">
    <property type="entry name" value="Ribosomal_uL14_CS"/>
</dbReference>
<dbReference type="InterPro" id="IPR036853">
    <property type="entry name" value="Ribosomal_uL14_sf"/>
</dbReference>
<dbReference type="NCBIfam" id="TIGR01067">
    <property type="entry name" value="rplN_bact"/>
    <property type="match status" value="1"/>
</dbReference>
<dbReference type="PANTHER" id="PTHR11761">
    <property type="entry name" value="50S/60S RIBOSOMAL PROTEIN L14/L23"/>
    <property type="match status" value="1"/>
</dbReference>
<dbReference type="PANTHER" id="PTHR11761:SF3">
    <property type="entry name" value="LARGE RIBOSOMAL SUBUNIT PROTEIN UL14M"/>
    <property type="match status" value="1"/>
</dbReference>
<dbReference type="Pfam" id="PF00238">
    <property type="entry name" value="Ribosomal_L14"/>
    <property type="match status" value="1"/>
</dbReference>
<dbReference type="SMART" id="SM01374">
    <property type="entry name" value="Ribosomal_L14"/>
    <property type="match status" value="1"/>
</dbReference>
<dbReference type="SUPFAM" id="SSF50193">
    <property type="entry name" value="Ribosomal protein L14"/>
    <property type="match status" value="1"/>
</dbReference>
<dbReference type="PROSITE" id="PS00049">
    <property type="entry name" value="RIBOSOMAL_L14"/>
    <property type="match status" value="1"/>
</dbReference>
<name>RK14_CHLSC</name>
<reference key="1">
    <citation type="journal article" date="2007" name="Mol. Phylogenet. Evol.">
        <title>Phylogenetic and evolutionary implications of complete chloroplast genome sequences of four early-diverging angiosperms: Buxus (Buxaceae), Chloranthus (Chloranthaceae), Dioscorea (Dioscoreaceae), and Illicium (Schisandraceae).</title>
        <authorList>
            <person name="Hansen D.R."/>
            <person name="Dastidar S.G."/>
            <person name="Cai Z."/>
            <person name="Penaflor C."/>
            <person name="Kuehl J.V."/>
            <person name="Boore J.L."/>
            <person name="Jansen R.K."/>
        </authorList>
    </citation>
    <scope>NUCLEOTIDE SEQUENCE [LARGE SCALE GENOMIC DNA]</scope>
</reference>
<protein>
    <recommendedName>
        <fullName evidence="1">Large ribosomal subunit protein uL14c</fullName>
    </recommendedName>
    <alternativeName>
        <fullName evidence="2">50S ribosomal protein L14, chloroplastic</fullName>
    </alternativeName>
</protein>
<gene>
    <name evidence="1" type="primary">rpl14</name>
</gene>
<sequence length="122" mass="13586">MIQPKTHLNVADNSGARELMCIRIIGASNHRYAHIGDVIVAVIKEAVPNMPLERSEVIRAVIVRTCKELKRDNGMIIRYDDNAAVVIDQEGNPRGTRVFGAIARELRQLNFTKIVSLAPEVL</sequence>
<geneLocation type="chloroplast"/>
<keyword id="KW-0150">Chloroplast</keyword>
<keyword id="KW-0934">Plastid</keyword>
<keyword id="KW-0687">Ribonucleoprotein</keyword>
<keyword id="KW-0689">Ribosomal protein</keyword>
<keyword id="KW-0694">RNA-binding</keyword>
<keyword id="KW-0699">rRNA-binding</keyword>
<accession>A6MMF9</accession>
<feature type="chain" id="PRO_0000355867" description="Large ribosomal subunit protein uL14c">
    <location>
        <begin position="1"/>
        <end position="122"/>
    </location>
</feature>
<comment type="function">
    <text evidence="1">Binds to 23S rRNA.</text>
</comment>
<comment type="subunit">
    <text evidence="1">Part of the 50S ribosomal subunit.</text>
</comment>
<comment type="subcellular location">
    <subcellularLocation>
        <location>Plastid</location>
        <location>Chloroplast</location>
    </subcellularLocation>
</comment>
<comment type="similarity">
    <text evidence="1">Belongs to the universal ribosomal protein uL14 family.</text>
</comment>
<proteinExistence type="inferred from homology"/>
<evidence type="ECO:0000255" key="1">
    <source>
        <dbReference type="HAMAP-Rule" id="MF_01367"/>
    </source>
</evidence>
<evidence type="ECO:0000305" key="2"/>
<organism>
    <name type="scientific">Chloranthus spicatus</name>
    <name type="common">Chulantree</name>
    <name type="synonym">Nigrina spicata</name>
    <dbReference type="NCBI Taxonomy" id="13006"/>
    <lineage>
        <taxon>Eukaryota</taxon>
        <taxon>Viridiplantae</taxon>
        <taxon>Streptophyta</taxon>
        <taxon>Embryophyta</taxon>
        <taxon>Tracheophyta</taxon>
        <taxon>Spermatophyta</taxon>
        <taxon>Magnoliopsida</taxon>
        <taxon>Chloranthales</taxon>
        <taxon>Chloranthaceae</taxon>
        <taxon>Chloranthus</taxon>
    </lineage>
</organism>